<keyword id="KW-0002">3D-structure</keyword>
<keyword id="KW-0539">Nucleus</keyword>
<keyword id="KW-1185">Reference proteome</keyword>
<keyword id="KW-0690">Ribosome biogenesis</keyword>
<name>RRS1_YEAST</name>
<organism>
    <name type="scientific">Saccharomyces cerevisiae (strain ATCC 204508 / S288c)</name>
    <name type="common">Baker's yeast</name>
    <dbReference type="NCBI Taxonomy" id="559292"/>
    <lineage>
        <taxon>Eukaryota</taxon>
        <taxon>Fungi</taxon>
        <taxon>Dikarya</taxon>
        <taxon>Ascomycota</taxon>
        <taxon>Saccharomycotina</taxon>
        <taxon>Saccharomycetes</taxon>
        <taxon>Saccharomycetales</taxon>
        <taxon>Saccharomycetaceae</taxon>
        <taxon>Saccharomyces</taxon>
    </lineage>
</organism>
<proteinExistence type="evidence at protein level"/>
<gene>
    <name type="primary">RRS1</name>
    <name type="ordered locus">YOR294W</name>
</gene>
<accession>Q08746</accession>
<accession>D6W2Z3</accession>
<protein>
    <recommendedName>
        <fullName>Regulator of ribosome biosynthesis</fullName>
    </recommendedName>
</protein>
<dbReference type="EMBL" id="Z75202">
    <property type="protein sequence ID" value="CAA99522.1"/>
    <property type="molecule type" value="Genomic_DNA"/>
</dbReference>
<dbReference type="EMBL" id="BK006948">
    <property type="protein sequence ID" value="DAA11059.1"/>
    <property type="molecule type" value="Genomic_DNA"/>
</dbReference>
<dbReference type="PIR" id="S67198">
    <property type="entry name" value="S67198"/>
</dbReference>
<dbReference type="RefSeq" id="NP_014937.1">
    <property type="nucleotide sequence ID" value="NM_001183713.1"/>
</dbReference>
<dbReference type="PDB" id="3JCT">
    <property type="method" value="EM"/>
    <property type="resolution" value="3.08 A"/>
    <property type="chains" value="w=1-203"/>
</dbReference>
<dbReference type="PDB" id="5A53">
    <property type="method" value="X-ray"/>
    <property type="resolution" value="2.40 A"/>
    <property type="chains" value="A=9-73, B=85-106"/>
</dbReference>
<dbReference type="PDB" id="5WXL">
    <property type="method" value="X-ray"/>
    <property type="resolution" value="1.90 A"/>
    <property type="chains" value="B/D=20-121"/>
</dbReference>
<dbReference type="PDB" id="6FT6">
    <property type="method" value="EM"/>
    <property type="resolution" value="3.90 A"/>
    <property type="chains" value="w=1-203"/>
</dbReference>
<dbReference type="PDB" id="6M62">
    <property type="method" value="EM"/>
    <property type="resolution" value="3.20 A"/>
    <property type="chains" value="w=1-203"/>
</dbReference>
<dbReference type="PDB" id="7BT6">
    <property type="method" value="EM"/>
    <property type="resolution" value="3.12 A"/>
    <property type="chains" value="w=1-203"/>
</dbReference>
<dbReference type="PDB" id="7BTB">
    <property type="method" value="EM"/>
    <property type="resolution" value="3.22 A"/>
    <property type="chains" value="w=1-203"/>
</dbReference>
<dbReference type="PDB" id="7OH3">
    <property type="method" value="EM"/>
    <property type="resolution" value="3.40 A"/>
    <property type="chains" value="w=1-203"/>
</dbReference>
<dbReference type="PDB" id="7OHQ">
    <property type="method" value="EM"/>
    <property type="resolution" value="3.10 A"/>
    <property type="chains" value="w=1-203"/>
</dbReference>
<dbReference type="PDB" id="7OHT">
    <property type="method" value="EM"/>
    <property type="resolution" value="4.70 A"/>
    <property type="chains" value="w=1-203"/>
</dbReference>
<dbReference type="PDB" id="7UG6">
    <property type="method" value="EM"/>
    <property type="resolution" value="2.90 A"/>
    <property type="chains" value="w=1-203"/>
</dbReference>
<dbReference type="PDB" id="7UOO">
    <property type="method" value="EM"/>
    <property type="resolution" value="2.34 A"/>
    <property type="chains" value="w=1-203"/>
</dbReference>
<dbReference type="PDB" id="7UQB">
    <property type="method" value="EM"/>
    <property type="resolution" value="2.43 A"/>
    <property type="chains" value="w=1-201"/>
</dbReference>
<dbReference type="PDB" id="7UQZ">
    <property type="method" value="EM"/>
    <property type="resolution" value="2.44 A"/>
    <property type="chains" value="w=2-203"/>
</dbReference>
<dbReference type="PDB" id="7V08">
    <property type="method" value="EM"/>
    <property type="resolution" value="2.36 A"/>
    <property type="chains" value="w=1-203"/>
</dbReference>
<dbReference type="PDBsum" id="3JCT"/>
<dbReference type="PDBsum" id="5A53"/>
<dbReference type="PDBsum" id="5WXL"/>
<dbReference type="PDBsum" id="6FT6"/>
<dbReference type="PDBsum" id="6M62"/>
<dbReference type="PDBsum" id="7BT6"/>
<dbReference type="PDBsum" id="7BTB"/>
<dbReference type="PDBsum" id="7OH3"/>
<dbReference type="PDBsum" id="7OHQ"/>
<dbReference type="PDBsum" id="7OHT"/>
<dbReference type="PDBsum" id="7UG6"/>
<dbReference type="PDBsum" id="7UOO"/>
<dbReference type="PDBsum" id="7UQB"/>
<dbReference type="PDBsum" id="7UQZ"/>
<dbReference type="PDBsum" id="7V08"/>
<dbReference type="EMDB" id="EMD-12892"/>
<dbReference type="EMDB" id="EMD-12905"/>
<dbReference type="EMDB" id="EMD-12908"/>
<dbReference type="EMDB" id="EMD-26485"/>
<dbReference type="EMDB" id="EMD-30108"/>
<dbReference type="EMDB" id="EMD-30170"/>
<dbReference type="EMDB" id="EMD-30174"/>
<dbReference type="EMDB" id="EMD-4302"/>
<dbReference type="SMR" id="Q08746"/>
<dbReference type="BioGRID" id="34682">
    <property type="interactions" value="289"/>
</dbReference>
<dbReference type="DIP" id="DIP-4081N"/>
<dbReference type="FunCoup" id="Q08746">
    <property type="interactions" value="751"/>
</dbReference>
<dbReference type="IntAct" id="Q08746">
    <property type="interactions" value="94"/>
</dbReference>
<dbReference type="MINT" id="Q08746"/>
<dbReference type="STRING" id="4932.YOR294W"/>
<dbReference type="iPTMnet" id="Q08746"/>
<dbReference type="PaxDb" id="4932-YOR294W"/>
<dbReference type="PeptideAtlas" id="Q08746"/>
<dbReference type="EnsemblFungi" id="YOR294W_mRNA">
    <property type="protein sequence ID" value="YOR294W"/>
    <property type="gene ID" value="YOR294W"/>
</dbReference>
<dbReference type="GeneID" id="854469"/>
<dbReference type="KEGG" id="sce:YOR294W"/>
<dbReference type="AGR" id="SGD:S000005820"/>
<dbReference type="SGD" id="S000005820">
    <property type="gene designation" value="RRS1"/>
</dbReference>
<dbReference type="VEuPathDB" id="FungiDB:YOR294W"/>
<dbReference type="eggNOG" id="KOG1765">
    <property type="taxonomic scope" value="Eukaryota"/>
</dbReference>
<dbReference type="GeneTree" id="ENSGT00390000005213"/>
<dbReference type="HOGENOM" id="CLU_065163_2_1_1"/>
<dbReference type="InParanoid" id="Q08746"/>
<dbReference type="OMA" id="KMVYDEA"/>
<dbReference type="OrthoDB" id="28455at2759"/>
<dbReference type="BioCyc" id="YEAST:G3O-33779-MONOMER"/>
<dbReference type="BioGRID-ORCS" id="854469">
    <property type="hits" value="1 hit in 10 CRISPR screens"/>
</dbReference>
<dbReference type="PRO" id="PR:Q08746"/>
<dbReference type="Proteomes" id="UP000002311">
    <property type="component" value="Chromosome XV"/>
</dbReference>
<dbReference type="RNAct" id="Q08746">
    <property type="molecule type" value="protein"/>
</dbReference>
<dbReference type="GO" id="GO:0034399">
    <property type="term" value="C:nuclear periphery"/>
    <property type="evidence" value="ECO:0000314"/>
    <property type="project" value="SGD"/>
</dbReference>
<dbReference type="GO" id="GO:0005730">
    <property type="term" value="C:nucleolus"/>
    <property type="evidence" value="ECO:0000314"/>
    <property type="project" value="SGD"/>
</dbReference>
<dbReference type="GO" id="GO:0005654">
    <property type="term" value="C:nucleoplasm"/>
    <property type="evidence" value="ECO:0000314"/>
    <property type="project" value="SGD"/>
</dbReference>
<dbReference type="GO" id="GO:0030687">
    <property type="term" value="C:preribosome, large subunit precursor"/>
    <property type="evidence" value="ECO:0000314"/>
    <property type="project" value="SGD"/>
</dbReference>
<dbReference type="GO" id="GO:0000447">
    <property type="term" value="P:endonucleolytic cleavage in ITS1 to separate SSU-rRNA from 5.8S rRNA and LSU-rRNA from tricistronic rRNA transcript (SSU-rRNA, 5.8S rRNA, LSU-rRNA)"/>
    <property type="evidence" value="ECO:0000315"/>
    <property type="project" value="SGD"/>
</dbReference>
<dbReference type="GO" id="GO:0042273">
    <property type="term" value="P:ribosomal large subunit biogenesis"/>
    <property type="evidence" value="ECO:0000315"/>
    <property type="project" value="SGD"/>
</dbReference>
<dbReference type="GO" id="GO:0000055">
    <property type="term" value="P:ribosomal large subunit export from nucleus"/>
    <property type="evidence" value="ECO:0000315"/>
    <property type="project" value="SGD"/>
</dbReference>
<dbReference type="InterPro" id="IPR007023">
    <property type="entry name" value="Ribosom_reg"/>
</dbReference>
<dbReference type="Pfam" id="PF04939">
    <property type="entry name" value="RRS1"/>
    <property type="match status" value="1"/>
</dbReference>
<comment type="function">
    <text evidence="2">Required for ribosome biogenesis.</text>
</comment>
<comment type="subunit">
    <text evidence="3">Component of a hexameric 5S RNP precursor complex, composed of 5S RNA, RRS1, RPF2, RPL5, RPL11A/RPL11B and SYO1; this complex acts as a precursor for ribosome assembly.</text>
</comment>
<comment type="interaction">
    <interactant intactId="EBI-16026">
        <id>Q08746</id>
    </interactant>
    <interactant intactId="EBI-6289">
        <id>P36049</id>
        <label>EBP2</label>
    </interactant>
    <organismsDiffer>false</organismsDiffer>
    <experiments>4</experiments>
</comment>
<comment type="interaction">
    <interactant intactId="EBI-16026">
        <id>Q08746</id>
    </interactant>
    <interactant intactId="EBI-25811">
        <id>P47069</id>
        <label>MPS3</label>
    </interactant>
    <organismsDiffer>false</organismsDiffer>
    <experiments>4</experiments>
</comment>
<comment type="interaction">
    <interactant intactId="EBI-16026">
        <id>Q08746</id>
    </interactant>
    <interactant intactId="EBI-29259">
        <id>P39744</id>
        <label>NOC2</label>
    </interactant>
    <organismsDiffer>false</organismsDiffer>
    <experiments>3</experiments>
</comment>
<comment type="interaction">
    <interactant intactId="EBI-16026">
        <id>Q08746</id>
    </interactant>
    <interactant intactId="EBI-15881">
        <id>P36160</id>
        <label>RPF2</label>
    </interactant>
    <organismsDiffer>false</organismsDiffer>
    <experiments>6</experiments>
</comment>
<comment type="subcellular location">
    <subcellularLocation>
        <location evidence="2">Nucleus</location>
    </subcellularLocation>
</comment>
<comment type="disruption phenotype">
    <text evidence="2">Depletion causes defects in processing of pre- rRNA and assembly of ribosomal subunits.</text>
</comment>
<comment type="similarity">
    <text evidence="4">Belongs to the RRS1 family.</text>
</comment>
<reference key="1">
    <citation type="journal article" date="1997" name="Yeast">
        <title>Sequence and analysis of a 36.2 kb fragment from the right arm of yeast chromosome XV reveals 19 open reading frames including SNF2 (5' end), CPA1, SLY41, a putative transport ATPase, a putative ribosomal protein and an SNF2 homologue.</title>
        <authorList>
            <person name="Poirey R."/>
            <person name="Cziepluch C."/>
            <person name="Tobiasch E."/>
            <person name="Pujol A."/>
            <person name="Kordes E."/>
            <person name="Jauniaux J.-C."/>
        </authorList>
    </citation>
    <scope>NUCLEOTIDE SEQUENCE [GENOMIC DNA]</scope>
    <source>
        <strain>ATCC 96604 / S288c / FY1679</strain>
    </source>
</reference>
<reference key="2">
    <citation type="journal article" date="1997" name="Nature">
        <title>The nucleotide sequence of Saccharomyces cerevisiae chromosome XV.</title>
        <authorList>
            <person name="Dujon B."/>
            <person name="Albermann K."/>
            <person name="Aldea M."/>
            <person name="Alexandraki D."/>
            <person name="Ansorge W."/>
            <person name="Arino J."/>
            <person name="Benes V."/>
            <person name="Bohn C."/>
            <person name="Bolotin-Fukuhara M."/>
            <person name="Bordonne R."/>
            <person name="Boyer J."/>
            <person name="Camasses A."/>
            <person name="Casamayor A."/>
            <person name="Casas C."/>
            <person name="Cheret G."/>
            <person name="Cziepluch C."/>
            <person name="Daignan-Fornier B."/>
            <person name="Dang V.-D."/>
            <person name="de Haan M."/>
            <person name="Delius H."/>
            <person name="Durand P."/>
            <person name="Fairhead C."/>
            <person name="Feldmann H."/>
            <person name="Gaillon L."/>
            <person name="Galisson F."/>
            <person name="Gamo F.-J."/>
            <person name="Gancedo C."/>
            <person name="Goffeau A."/>
            <person name="Goulding S.E."/>
            <person name="Grivell L.A."/>
            <person name="Habbig B."/>
            <person name="Hand N.J."/>
            <person name="Hani J."/>
            <person name="Hattenhorst U."/>
            <person name="Hebling U."/>
            <person name="Hernando Y."/>
            <person name="Herrero E."/>
            <person name="Heumann K."/>
            <person name="Hiesel R."/>
            <person name="Hilger F."/>
            <person name="Hofmann B."/>
            <person name="Hollenberg C.P."/>
            <person name="Hughes B."/>
            <person name="Jauniaux J.-C."/>
            <person name="Kalogeropoulos A."/>
            <person name="Katsoulou C."/>
            <person name="Kordes E."/>
            <person name="Lafuente M.J."/>
            <person name="Landt O."/>
            <person name="Louis E.J."/>
            <person name="Maarse A.C."/>
            <person name="Madania A."/>
            <person name="Mannhaupt G."/>
            <person name="Marck C."/>
            <person name="Martin R.P."/>
            <person name="Mewes H.-W."/>
            <person name="Michaux G."/>
            <person name="Paces V."/>
            <person name="Parle-McDermott A.G."/>
            <person name="Pearson B.M."/>
            <person name="Perrin A."/>
            <person name="Pettersson B."/>
            <person name="Poch O."/>
            <person name="Pohl T.M."/>
            <person name="Poirey R."/>
            <person name="Portetelle D."/>
            <person name="Pujol A."/>
            <person name="Purnelle B."/>
            <person name="Ramezani Rad M."/>
            <person name="Rechmann S."/>
            <person name="Schwager C."/>
            <person name="Schweizer M."/>
            <person name="Sor F."/>
            <person name="Sterky F."/>
            <person name="Tarassov I.A."/>
            <person name="Teodoru C."/>
            <person name="Tettelin H."/>
            <person name="Thierry A."/>
            <person name="Tobiasch E."/>
            <person name="Tzermia M."/>
            <person name="Uhlen M."/>
            <person name="Unseld M."/>
            <person name="Valens M."/>
            <person name="Vandenbol M."/>
            <person name="Vetter I."/>
            <person name="Vlcek C."/>
            <person name="Voet M."/>
            <person name="Volckaert G."/>
            <person name="Voss H."/>
            <person name="Wambutt R."/>
            <person name="Wedler H."/>
            <person name="Wiemann S."/>
            <person name="Winsor B."/>
            <person name="Wolfe K.H."/>
            <person name="Zollner A."/>
            <person name="Zumstein E."/>
            <person name="Kleine K."/>
        </authorList>
    </citation>
    <scope>NUCLEOTIDE SEQUENCE [LARGE SCALE GENOMIC DNA]</scope>
    <source>
        <strain>ATCC 204508 / S288c</strain>
    </source>
</reference>
<reference key="3">
    <citation type="journal article" date="2014" name="G3 (Bethesda)">
        <title>The reference genome sequence of Saccharomyces cerevisiae: Then and now.</title>
        <authorList>
            <person name="Engel S.R."/>
            <person name="Dietrich F.S."/>
            <person name="Fisk D.G."/>
            <person name="Binkley G."/>
            <person name="Balakrishnan R."/>
            <person name="Costanzo M.C."/>
            <person name="Dwight S.S."/>
            <person name="Hitz B.C."/>
            <person name="Karra K."/>
            <person name="Nash R.S."/>
            <person name="Weng S."/>
            <person name="Wong E.D."/>
            <person name="Lloyd P."/>
            <person name="Skrzypek M.S."/>
            <person name="Miyasato S.R."/>
            <person name="Simison M."/>
            <person name="Cherry J.M."/>
        </authorList>
    </citation>
    <scope>GENOME REANNOTATION</scope>
    <source>
        <strain>ATCC 204508 / S288c</strain>
    </source>
</reference>
<reference key="4">
    <citation type="journal article" date="2000" name="Mol. Cell. Biol.">
        <title>RRS1, a conserved essential gene, encodes a novel regulatory protein required for ribosome biogenesis in Saccharomyces cerevisiae.</title>
        <authorList>
            <person name="Tsuno A."/>
            <person name="Miyoshi K."/>
            <person name="Tsujii R."/>
            <person name="Miyakawa T."/>
            <person name="Mizuta K."/>
        </authorList>
    </citation>
    <scope>FUNCTION</scope>
    <scope>SUBCELLULAR LOCATION</scope>
    <scope>DISRUPTION PHENOTYPE</scope>
</reference>
<reference key="5">
    <citation type="journal article" date="2023" name="Nat. Struct. Mol. Biol.">
        <title>Structure of nascent 5S RNPs at the crossroad between ribosome assembly and MDM2-p53 pathways.</title>
        <authorList>
            <person name="Castillo Duque de Estrada N.M."/>
            <person name="Thoms M."/>
            <person name="Flemming D."/>
            <person name="Hammaren H.M."/>
            <person name="Buschauer R."/>
            <person name="Ameismeier M."/>
            <person name="Bassler J."/>
            <person name="Beck M."/>
            <person name="Beckmann R."/>
            <person name="Hurt E."/>
        </authorList>
    </citation>
    <scope>SUBUNIT</scope>
</reference>
<evidence type="ECO:0000256" key="1">
    <source>
        <dbReference type="SAM" id="MobiDB-lite"/>
    </source>
</evidence>
<evidence type="ECO:0000269" key="2">
    <source>
    </source>
</evidence>
<evidence type="ECO:0000269" key="3">
    <source>
    </source>
</evidence>
<evidence type="ECO:0000305" key="4"/>
<evidence type="ECO:0007829" key="5">
    <source>
        <dbReference type="PDB" id="5WXL"/>
    </source>
</evidence>
<sequence>MSAEDYKNLPVTVEKPIPVVYDLGNLAAFDSNVLDKNDLDSSNARREEKIKSLTRDNVQLLINQLLSLPMKTTTESVGGTGGQSSVMTLLQLPDPTTDLPREKPLPKAKAMTKWEKFAAKKGIKPKERAGKMIYDEASGEWVPKWGYKGANKKLDDQWLVEVDDKVKGTDNELIDPRTLNRAERKRLVKKNEKQQRRNMKNAL</sequence>
<feature type="chain" id="PRO_0000185379" description="Regulator of ribosome biosynthesis">
    <location>
        <begin position="1"/>
        <end position="203"/>
    </location>
</feature>
<feature type="region of interest" description="Disordered" evidence="1">
    <location>
        <begin position="184"/>
        <end position="203"/>
    </location>
</feature>
<feature type="strand" evidence="5">
    <location>
        <begin position="20"/>
        <end position="22"/>
    </location>
</feature>
<feature type="helix" evidence="5">
    <location>
        <begin position="23"/>
        <end position="25"/>
    </location>
</feature>
<feature type="strand" evidence="5">
    <location>
        <begin position="27"/>
        <end position="30"/>
    </location>
</feature>
<feature type="helix" evidence="5">
    <location>
        <begin position="36"/>
        <end position="39"/>
    </location>
</feature>
<feature type="helix" evidence="5">
    <location>
        <begin position="46"/>
        <end position="65"/>
    </location>
</feature>
<feature type="strand" evidence="5">
    <location>
        <begin position="70"/>
        <end position="72"/>
    </location>
</feature>
<feature type="strand" evidence="5">
    <location>
        <begin position="88"/>
        <end position="91"/>
    </location>
</feature>